<feature type="chain" id="PRO_0000365094" description="UPF0729 protein GD16342">
    <location>
        <begin position="1"/>
        <end position="97"/>
    </location>
</feature>
<feature type="region of interest" description="Disordered" evidence="2">
    <location>
        <begin position="64"/>
        <end position="97"/>
    </location>
</feature>
<feature type="modified residue" description="Phosphoserine" evidence="1">
    <location>
        <position position="69"/>
    </location>
</feature>
<organism>
    <name type="scientific">Drosophila simulans</name>
    <name type="common">Fruit fly</name>
    <dbReference type="NCBI Taxonomy" id="7240"/>
    <lineage>
        <taxon>Eukaryota</taxon>
        <taxon>Metazoa</taxon>
        <taxon>Ecdysozoa</taxon>
        <taxon>Arthropoda</taxon>
        <taxon>Hexapoda</taxon>
        <taxon>Insecta</taxon>
        <taxon>Pterygota</taxon>
        <taxon>Neoptera</taxon>
        <taxon>Endopterygota</taxon>
        <taxon>Diptera</taxon>
        <taxon>Brachycera</taxon>
        <taxon>Muscomorpha</taxon>
        <taxon>Ephydroidea</taxon>
        <taxon>Drosophilidae</taxon>
        <taxon>Drosophila</taxon>
        <taxon>Sophophora</taxon>
    </lineage>
</organism>
<comment type="similarity">
    <text evidence="3">Belongs to the UPF0729 family.</text>
</comment>
<name>U729_DROSI</name>
<sequence>MVCVPCFIIPLLLYIWHKFVQPIILRYWNPWEKKDAQGNVIKKGPDFPFECKGGVCPFVPGAKKPEKASVGPAEESQNPPLNAIAAETEVDESKKEI</sequence>
<evidence type="ECO:0000250" key="1"/>
<evidence type="ECO:0000256" key="2">
    <source>
        <dbReference type="SAM" id="MobiDB-lite"/>
    </source>
</evidence>
<evidence type="ECO:0000305" key="3"/>
<gene>
    <name type="ORF">GD16342</name>
</gene>
<dbReference type="EMBL" id="CM000366">
    <property type="protein sequence ID" value="EDX16979.1"/>
    <property type="molecule type" value="Genomic_DNA"/>
</dbReference>
<dbReference type="RefSeq" id="XP_016037954.1">
    <property type="nucleotide sequence ID" value="XM_016173029.1"/>
</dbReference>
<dbReference type="RefSeq" id="XP_016037955.1">
    <property type="nucleotide sequence ID" value="XM_016173030.1"/>
</dbReference>
<dbReference type="SMR" id="B4R3W7"/>
<dbReference type="EnsemblMetazoa" id="FBtr0216252">
    <property type="protein sequence ID" value="FBpp0214744"/>
    <property type="gene ID" value="FBgn0187965"/>
</dbReference>
<dbReference type="EnsemblMetazoa" id="FBtr0355791">
    <property type="protein sequence ID" value="FBpp0320031"/>
    <property type="gene ID" value="FBgn0187965"/>
</dbReference>
<dbReference type="EnsemblMetazoa" id="FBtr0362497">
    <property type="protein sequence ID" value="FBpp0326122"/>
    <property type="gene ID" value="FBgn0187965"/>
</dbReference>
<dbReference type="EnsemblMetazoa" id="XM_016173028.3">
    <property type="protein sequence ID" value="XP_016037953.1"/>
    <property type="gene ID" value="LOC6725001"/>
</dbReference>
<dbReference type="GeneID" id="6725001"/>
<dbReference type="KEGG" id="dsi:Dsimw501_GD16342"/>
<dbReference type="HOGENOM" id="CLU_167079_0_0_1"/>
<dbReference type="OMA" id="ATDAKEC"/>
<dbReference type="OrthoDB" id="10062823at2759"/>
<dbReference type="PhylomeDB" id="B4R3W7"/>
<dbReference type="Proteomes" id="UP000000304">
    <property type="component" value="Chromosome X"/>
</dbReference>
<dbReference type="Bgee" id="FBgn0187965">
    <property type="expression patterns" value="Expressed in female reproductive system and 3 other cell types or tissues"/>
</dbReference>
<dbReference type="InterPro" id="IPR026776">
    <property type="entry name" value="UPF0729_C18orf32-like"/>
</dbReference>
<dbReference type="PANTHER" id="PTHR13456">
    <property type="entry name" value="UPF0729 PROTEIN C18ORF32"/>
    <property type="match status" value="1"/>
</dbReference>
<dbReference type="PANTHER" id="PTHR13456:SF0">
    <property type="entry name" value="UPF0729 PROTEIN C18ORF32"/>
    <property type="match status" value="1"/>
</dbReference>
<dbReference type="Pfam" id="PF14975">
    <property type="entry name" value="DUF4512"/>
    <property type="match status" value="1"/>
</dbReference>
<proteinExistence type="inferred from homology"/>
<reference key="1">
    <citation type="journal article" date="2007" name="Nature">
        <title>Evolution of genes and genomes on the Drosophila phylogeny.</title>
        <authorList>
            <consortium name="Drosophila 12 genomes consortium"/>
        </authorList>
    </citation>
    <scope>NUCLEOTIDE SEQUENCE [LARGE SCALE GENOMIC DNA]</scope>
</reference>
<keyword id="KW-0597">Phosphoprotein</keyword>
<keyword id="KW-1185">Reference proteome</keyword>
<protein>
    <recommendedName>
        <fullName>UPF0729 protein GD16342</fullName>
    </recommendedName>
</protein>
<accession>B4R3W7</accession>